<protein>
    <recommendedName>
        <fullName evidence="1">3-hydroxydecanoyl-[acyl-carrier-protein] dehydratase</fullName>
        <ecNumber evidence="1">4.2.1.59</ecNumber>
    </recommendedName>
    <alternativeName>
        <fullName evidence="1">3-hydroxyacyl-[acyl-carrier-protein] dehydratase FabA</fullName>
    </alternativeName>
    <alternativeName>
        <fullName evidence="1">Beta-hydroxydecanoyl thioester dehydrase</fullName>
    </alternativeName>
    <alternativeName>
        <fullName evidence="1">Trans-2-decenoyl-[acyl-carrier-protein] isomerase</fullName>
        <ecNumber evidence="1">5.3.3.14</ecNumber>
    </alternativeName>
</protein>
<reference key="1">
    <citation type="submission" date="2006-08" db="EMBL/GenBank/DDBJ databases">
        <title>Complete sequence of Shewanella sp. MR-4.</title>
        <authorList>
            <consortium name="US DOE Joint Genome Institute"/>
            <person name="Copeland A."/>
            <person name="Lucas S."/>
            <person name="Lapidus A."/>
            <person name="Barry K."/>
            <person name="Detter J.C."/>
            <person name="Glavina del Rio T."/>
            <person name="Hammon N."/>
            <person name="Israni S."/>
            <person name="Dalin E."/>
            <person name="Tice H."/>
            <person name="Pitluck S."/>
            <person name="Kiss H."/>
            <person name="Brettin T."/>
            <person name="Bruce D."/>
            <person name="Han C."/>
            <person name="Tapia R."/>
            <person name="Gilna P."/>
            <person name="Schmutz J."/>
            <person name="Larimer F."/>
            <person name="Land M."/>
            <person name="Hauser L."/>
            <person name="Kyrpides N."/>
            <person name="Mikhailova N."/>
            <person name="Nealson K."/>
            <person name="Konstantinidis K."/>
            <person name="Klappenbach J."/>
            <person name="Tiedje J."/>
            <person name="Richardson P."/>
        </authorList>
    </citation>
    <scope>NUCLEOTIDE SEQUENCE [LARGE SCALE GENOMIC DNA]</scope>
    <source>
        <strain>MR-4</strain>
    </source>
</reference>
<organism>
    <name type="scientific">Shewanella sp. (strain MR-4)</name>
    <dbReference type="NCBI Taxonomy" id="60480"/>
    <lineage>
        <taxon>Bacteria</taxon>
        <taxon>Pseudomonadati</taxon>
        <taxon>Pseudomonadota</taxon>
        <taxon>Gammaproteobacteria</taxon>
        <taxon>Alteromonadales</taxon>
        <taxon>Shewanellaceae</taxon>
        <taxon>Shewanella</taxon>
    </lineage>
</organism>
<gene>
    <name evidence="1" type="primary">fabA</name>
    <name type="ordered locus">Shewmr4_1545</name>
</gene>
<evidence type="ECO:0000255" key="1">
    <source>
        <dbReference type="HAMAP-Rule" id="MF_00405"/>
    </source>
</evidence>
<keyword id="KW-0963">Cytoplasm</keyword>
<keyword id="KW-0275">Fatty acid biosynthesis</keyword>
<keyword id="KW-0276">Fatty acid metabolism</keyword>
<keyword id="KW-0413">Isomerase</keyword>
<keyword id="KW-0444">Lipid biosynthesis</keyword>
<keyword id="KW-0443">Lipid metabolism</keyword>
<keyword id="KW-0456">Lyase</keyword>
<proteinExistence type="inferred from homology"/>
<comment type="function">
    <text evidence="1">Necessary for the introduction of cis unsaturation into fatty acids. Catalyzes the dehydration of (3R)-3-hydroxydecanoyl-ACP to E-(2)-decenoyl-ACP and then its isomerization to Z-(3)-decenoyl-ACP. Can catalyze the dehydratase reaction for beta-hydroxyacyl-ACPs with saturated chain lengths up to 16:0, being most active on intermediate chain length.</text>
</comment>
<comment type="catalytic activity">
    <reaction evidence="1">
        <text>a (3R)-hydroxyacyl-[ACP] = a (2E)-enoyl-[ACP] + H2O</text>
        <dbReference type="Rhea" id="RHEA:13097"/>
        <dbReference type="Rhea" id="RHEA-COMP:9925"/>
        <dbReference type="Rhea" id="RHEA-COMP:9945"/>
        <dbReference type="ChEBI" id="CHEBI:15377"/>
        <dbReference type="ChEBI" id="CHEBI:78784"/>
        <dbReference type="ChEBI" id="CHEBI:78827"/>
        <dbReference type="EC" id="4.2.1.59"/>
    </reaction>
</comment>
<comment type="catalytic activity">
    <reaction evidence="1">
        <text>(3R)-hydroxydecanoyl-[ACP] = (2E)-decenoyl-[ACP] + H2O</text>
        <dbReference type="Rhea" id="RHEA:41860"/>
        <dbReference type="Rhea" id="RHEA-COMP:9638"/>
        <dbReference type="Rhea" id="RHEA-COMP:9639"/>
        <dbReference type="ChEBI" id="CHEBI:15377"/>
        <dbReference type="ChEBI" id="CHEBI:78466"/>
        <dbReference type="ChEBI" id="CHEBI:78467"/>
    </reaction>
</comment>
<comment type="catalytic activity">
    <reaction evidence="1">
        <text>(2E)-decenoyl-[ACP] = (3Z)-decenoyl-[ACP]</text>
        <dbReference type="Rhea" id="RHEA:23568"/>
        <dbReference type="Rhea" id="RHEA-COMP:9639"/>
        <dbReference type="Rhea" id="RHEA-COMP:9927"/>
        <dbReference type="ChEBI" id="CHEBI:78467"/>
        <dbReference type="ChEBI" id="CHEBI:78798"/>
        <dbReference type="EC" id="5.3.3.14"/>
    </reaction>
</comment>
<comment type="pathway">
    <text evidence="1">Lipid metabolism; fatty acid biosynthesis.</text>
</comment>
<comment type="subunit">
    <text evidence="1">Homodimer.</text>
</comment>
<comment type="subcellular location">
    <subcellularLocation>
        <location evidence="1">Cytoplasm</location>
    </subcellularLocation>
</comment>
<comment type="similarity">
    <text evidence="1">Belongs to the thioester dehydratase family. FabA subfamily.</text>
</comment>
<feature type="chain" id="PRO_0000267752" description="3-hydroxydecanoyl-[acyl-carrier-protein] dehydratase">
    <location>
        <begin position="1"/>
        <end position="171"/>
    </location>
</feature>
<feature type="active site" evidence="1">
    <location>
        <position position="70"/>
    </location>
</feature>
<sequence>MNKANSFNKEELIACGHGKLFGPNSPRLPVDNMLMIDRIITINDNGGEFGKGEIVAELDINPDLWFFGCHFISDPVMPGCLGLDAMWQLVGFYLGWEGAEGKGRALGVGEVKFTGQVLPGAKKVTYKLNIKRTIHRKLVMGIADAILEVDGRQIYSATDLKVGVFSDTSTF</sequence>
<accession>Q0HJZ4</accession>
<name>FABA_SHESM</name>
<dbReference type="EC" id="4.2.1.59" evidence="1"/>
<dbReference type="EC" id="5.3.3.14" evidence="1"/>
<dbReference type="EMBL" id="CP000446">
    <property type="protein sequence ID" value="ABI38623.1"/>
    <property type="molecule type" value="Genomic_DNA"/>
</dbReference>
<dbReference type="RefSeq" id="WP_011622326.1">
    <property type="nucleotide sequence ID" value="NC_008321.1"/>
</dbReference>
<dbReference type="SMR" id="Q0HJZ4"/>
<dbReference type="KEGG" id="she:Shewmr4_1545"/>
<dbReference type="HOGENOM" id="CLU_097925_0_0_6"/>
<dbReference type="UniPathway" id="UPA00094"/>
<dbReference type="GO" id="GO:0005737">
    <property type="term" value="C:cytoplasm"/>
    <property type="evidence" value="ECO:0007669"/>
    <property type="project" value="UniProtKB-SubCell"/>
</dbReference>
<dbReference type="GO" id="GO:0019171">
    <property type="term" value="F:(3R)-hydroxyacyl-[acyl-carrier-protein] dehydratase activity"/>
    <property type="evidence" value="ECO:0007669"/>
    <property type="project" value="UniProtKB-UniRule"/>
</dbReference>
<dbReference type="GO" id="GO:0034017">
    <property type="term" value="F:trans-2-decenoyl-acyl-carrier-protein isomerase activity"/>
    <property type="evidence" value="ECO:0007669"/>
    <property type="project" value="UniProtKB-UniRule"/>
</dbReference>
<dbReference type="GO" id="GO:0006636">
    <property type="term" value="P:unsaturated fatty acid biosynthetic process"/>
    <property type="evidence" value="ECO:0007669"/>
    <property type="project" value="UniProtKB-UniRule"/>
</dbReference>
<dbReference type="CDD" id="cd01287">
    <property type="entry name" value="FabA"/>
    <property type="match status" value="1"/>
</dbReference>
<dbReference type="Gene3D" id="3.10.129.10">
    <property type="entry name" value="Hotdog Thioesterase"/>
    <property type="match status" value="1"/>
</dbReference>
<dbReference type="HAMAP" id="MF_00405">
    <property type="entry name" value="FabA"/>
    <property type="match status" value="1"/>
</dbReference>
<dbReference type="InterPro" id="IPR010083">
    <property type="entry name" value="FabA"/>
</dbReference>
<dbReference type="InterPro" id="IPR013114">
    <property type="entry name" value="FabA_FabZ"/>
</dbReference>
<dbReference type="InterPro" id="IPR029069">
    <property type="entry name" value="HotDog_dom_sf"/>
</dbReference>
<dbReference type="NCBIfam" id="TIGR01749">
    <property type="entry name" value="fabA"/>
    <property type="match status" value="1"/>
</dbReference>
<dbReference type="NCBIfam" id="NF003509">
    <property type="entry name" value="PRK05174.1"/>
    <property type="match status" value="1"/>
</dbReference>
<dbReference type="PANTHER" id="PTHR30272">
    <property type="entry name" value="3-HYDROXYACYL-[ACYL-CARRIER-PROTEIN] DEHYDRATASE"/>
    <property type="match status" value="1"/>
</dbReference>
<dbReference type="PANTHER" id="PTHR30272:SF8">
    <property type="entry name" value="3-HYDROXYDECANOYL-[ACYL-CARRIER-PROTEIN] DEHYDRATASE"/>
    <property type="match status" value="1"/>
</dbReference>
<dbReference type="Pfam" id="PF07977">
    <property type="entry name" value="FabA"/>
    <property type="match status" value="1"/>
</dbReference>
<dbReference type="SUPFAM" id="SSF54637">
    <property type="entry name" value="Thioesterase/thiol ester dehydrase-isomerase"/>
    <property type="match status" value="1"/>
</dbReference>